<accession>P9WIX4</accession>
<accession>L0TEX0</accession>
<accession>O53345</accession>
<organism>
    <name type="scientific">Mycobacterium tuberculosis (strain CDC 1551 / Oshkosh)</name>
    <dbReference type="NCBI Taxonomy" id="83331"/>
    <lineage>
        <taxon>Bacteria</taxon>
        <taxon>Bacillati</taxon>
        <taxon>Actinomycetota</taxon>
        <taxon>Actinomycetes</taxon>
        <taxon>Mycobacteriales</taxon>
        <taxon>Mycobacteriaceae</taxon>
        <taxon>Mycobacterium</taxon>
        <taxon>Mycobacterium tuberculosis complex</taxon>
    </lineage>
</organism>
<name>NUDC_MYCTO</name>
<gene>
    <name evidence="1" type="primary">nudC</name>
    <name type="ordered locus">MT3293</name>
</gene>
<evidence type="ECO:0000255" key="1">
    <source>
        <dbReference type="HAMAP-Rule" id="MF_00297"/>
    </source>
</evidence>
<evidence type="ECO:0000305" key="2"/>
<reference key="1">
    <citation type="journal article" date="2002" name="J. Bacteriol.">
        <title>Whole-genome comparison of Mycobacterium tuberculosis clinical and laboratory strains.</title>
        <authorList>
            <person name="Fleischmann R.D."/>
            <person name="Alland D."/>
            <person name="Eisen J.A."/>
            <person name="Carpenter L."/>
            <person name="White O."/>
            <person name="Peterson J.D."/>
            <person name="DeBoy R.T."/>
            <person name="Dodson R.J."/>
            <person name="Gwinn M.L."/>
            <person name="Haft D.H."/>
            <person name="Hickey E.K."/>
            <person name="Kolonay J.F."/>
            <person name="Nelson W.C."/>
            <person name="Umayam L.A."/>
            <person name="Ermolaeva M.D."/>
            <person name="Salzberg S.L."/>
            <person name="Delcher A."/>
            <person name="Utterback T.R."/>
            <person name="Weidman J.F."/>
            <person name="Khouri H.M."/>
            <person name="Gill J."/>
            <person name="Mikula A."/>
            <person name="Bishai W."/>
            <person name="Jacobs W.R. Jr."/>
            <person name="Venter J.C."/>
            <person name="Fraser C.M."/>
        </authorList>
    </citation>
    <scope>NUCLEOTIDE SEQUENCE [LARGE SCALE GENOMIC DNA]</scope>
    <source>
        <strain>CDC 1551 / Oshkosh</strain>
    </source>
</reference>
<sequence length="313" mass="33826">MTNVSGVDFQLRSVPLLSRVGADRADRLRTDMEAAAAGWPGAALLRVDSRNRVLVANGRVLLGAAIELADKPPPEAVFLGRVEGGRHVWAVRAALQPIADPDIPAEAVDLRGLGRIMDDTSSQLVSSASALLNWHDNARFSALDGAPTKPARAGWSRVNPITGHEEFPRIDPAVICLVHDGADRAVLARQAAWPERMFSLLAGFVEAGESFEVCVAREIREEIGLTVRDVRYLGSQQWPFPRSLMVGFHALGDPDEEFSFSDGEIAEAAWFTRDEVRAALAAGDWSSASESKLLLPGSISIARVIIESWAACE</sequence>
<protein>
    <recommendedName>
        <fullName evidence="1">NAD-capped RNA hydrolase NudC</fullName>
        <shortName evidence="1">DeNADding enzyme NudC</shortName>
        <ecNumber evidence="1">3.6.1.-</ecNumber>
    </recommendedName>
    <alternativeName>
        <fullName evidence="1">NADH pyrophosphatase</fullName>
        <ecNumber evidence="1">3.6.1.22</ecNumber>
    </alternativeName>
</protein>
<dbReference type="EC" id="3.6.1.-" evidence="1"/>
<dbReference type="EC" id="3.6.1.22" evidence="1"/>
<dbReference type="EMBL" id="AE000516">
    <property type="protein sequence ID" value="AAK47636.1"/>
    <property type="status" value="ALT_INIT"/>
    <property type="molecule type" value="Genomic_DNA"/>
</dbReference>
<dbReference type="PIR" id="E70951">
    <property type="entry name" value="E70951"/>
</dbReference>
<dbReference type="RefSeq" id="WP_003899965.1">
    <property type="nucleotide sequence ID" value="NZ_KK341227.1"/>
</dbReference>
<dbReference type="SMR" id="P9WIX4"/>
<dbReference type="KEGG" id="mtc:MT3293"/>
<dbReference type="PATRIC" id="fig|83331.31.peg.3546"/>
<dbReference type="HOGENOM" id="CLU_037162_0_4_11"/>
<dbReference type="Proteomes" id="UP000001020">
    <property type="component" value="Chromosome"/>
</dbReference>
<dbReference type="GO" id="GO:0005829">
    <property type="term" value="C:cytosol"/>
    <property type="evidence" value="ECO:0007669"/>
    <property type="project" value="TreeGrafter"/>
</dbReference>
<dbReference type="GO" id="GO:0000287">
    <property type="term" value="F:magnesium ion binding"/>
    <property type="evidence" value="ECO:0007669"/>
    <property type="project" value="UniProtKB-UniRule"/>
</dbReference>
<dbReference type="GO" id="GO:0030145">
    <property type="term" value="F:manganese ion binding"/>
    <property type="evidence" value="ECO:0007669"/>
    <property type="project" value="UniProtKB-UniRule"/>
</dbReference>
<dbReference type="GO" id="GO:0000210">
    <property type="term" value="F:NAD+ diphosphatase activity"/>
    <property type="evidence" value="ECO:0007669"/>
    <property type="project" value="UniProtKB-UniRule"/>
</dbReference>
<dbReference type="GO" id="GO:0035529">
    <property type="term" value="F:NADH pyrophosphatase activity"/>
    <property type="evidence" value="ECO:0007669"/>
    <property type="project" value="TreeGrafter"/>
</dbReference>
<dbReference type="GO" id="GO:0110153">
    <property type="term" value="F:RNA NAD-cap (NMN-forming) hydrolase activity"/>
    <property type="evidence" value="ECO:0007669"/>
    <property type="project" value="RHEA"/>
</dbReference>
<dbReference type="GO" id="GO:0019677">
    <property type="term" value="P:NAD catabolic process"/>
    <property type="evidence" value="ECO:0007669"/>
    <property type="project" value="TreeGrafter"/>
</dbReference>
<dbReference type="GO" id="GO:0006734">
    <property type="term" value="P:NADH metabolic process"/>
    <property type="evidence" value="ECO:0007669"/>
    <property type="project" value="TreeGrafter"/>
</dbReference>
<dbReference type="GO" id="GO:0006742">
    <property type="term" value="P:NADP catabolic process"/>
    <property type="evidence" value="ECO:0007669"/>
    <property type="project" value="TreeGrafter"/>
</dbReference>
<dbReference type="CDD" id="cd03429">
    <property type="entry name" value="NUDIX_NADH_pyrophosphatase_Nudt13"/>
    <property type="match status" value="1"/>
</dbReference>
<dbReference type="FunFam" id="3.90.79.10:FF:000048">
    <property type="entry name" value="NADH pyrophosphatase"/>
    <property type="match status" value="1"/>
</dbReference>
<dbReference type="Gene3D" id="3.90.79.20">
    <property type="match status" value="1"/>
</dbReference>
<dbReference type="Gene3D" id="3.90.79.10">
    <property type="entry name" value="Nucleoside Triphosphate Pyrophosphohydrolase"/>
    <property type="match status" value="1"/>
</dbReference>
<dbReference type="HAMAP" id="MF_00297">
    <property type="entry name" value="Nudix_NudC"/>
    <property type="match status" value="1"/>
</dbReference>
<dbReference type="InterPro" id="IPR050241">
    <property type="entry name" value="NAD-cap_RNA_hydrolase_NudC"/>
</dbReference>
<dbReference type="InterPro" id="IPR015375">
    <property type="entry name" value="NADH_PPase-like_N"/>
</dbReference>
<dbReference type="InterPro" id="IPR049734">
    <property type="entry name" value="NudC-like_C"/>
</dbReference>
<dbReference type="InterPro" id="IPR015797">
    <property type="entry name" value="NUDIX_hydrolase-like_dom_sf"/>
</dbReference>
<dbReference type="InterPro" id="IPR020084">
    <property type="entry name" value="NUDIX_hydrolase_CS"/>
</dbReference>
<dbReference type="InterPro" id="IPR000086">
    <property type="entry name" value="NUDIX_hydrolase_dom"/>
</dbReference>
<dbReference type="InterPro" id="IPR022925">
    <property type="entry name" value="RNA_Hydrolase_NudC"/>
</dbReference>
<dbReference type="InterPro" id="IPR015376">
    <property type="entry name" value="Znr_NADH_PPase"/>
</dbReference>
<dbReference type="NCBIfam" id="NF001299">
    <property type="entry name" value="PRK00241.1"/>
    <property type="match status" value="1"/>
</dbReference>
<dbReference type="PANTHER" id="PTHR42904:SF6">
    <property type="entry name" value="NAD-CAPPED RNA HYDROLASE NUDT12"/>
    <property type="match status" value="1"/>
</dbReference>
<dbReference type="PANTHER" id="PTHR42904">
    <property type="entry name" value="NUDIX HYDROLASE, NUDC SUBFAMILY"/>
    <property type="match status" value="1"/>
</dbReference>
<dbReference type="Pfam" id="PF00293">
    <property type="entry name" value="NUDIX"/>
    <property type="match status" value="1"/>
</dbReference>
<dbReference type="Pfam" id="PF09296">
    <property type="entry name" value="NUDIX-like"/>
    <property type="match status" value="1"/>
</dbReference>
<dbReference type="Pfam" id="PF09297">
    <property type="entry name" value="Zn_ribbon_NUD"/>
    <property type="match status" value="1"/>
</dbReference>
<dbReference type="SUPFAM" id="SSF55811">
    <property type="entry name" value="Nudix"/>
    <property type="match status" value="1"/>
</dbReference>
<dbReference type="PROSITE" id="PS51462">
    <property type="entry name" value="NUDIX"/>
    <property type="match status" value="1"/>
</dbReference>
<dbReference type="PROSITE" id="PS00893">
    <property type="entry name" value="NUDIX_BOX"/>
    <property type="match status" value="1"/>
</dbReference>
<feature type="chain" id="PRO_0000427929" description="NAD-capped RNA hydrolase NudC">
    <location>
        <begin position="1"/>
        <end position="313"/>
    </location>
</feature>
<feature type="domain" description="Nudix hydrolase" evidence="1">
    <location>
        <begin position="168"/>
        <end position="293"/>
    </location>
</feature>
<feature type="short sequence motif" description="Nudix box" evidence="1">
    <location>
        <begin position="203"/>
        <end position="224"/>
    </location>
</feature>
<feature type="binding site" evidence="1">
    <location>
        <position position="111"/>
    </location>
    <ligand>
        <name>substrate</name>
    </ligand>
</feature>
<feature type="binding site" evidence="1">
    <location>
        <position position="202"/>
    </location>
    <ligand>
        <name>a divalent metal cation</name>
        <dbReference type="ChEBI" id="CHEBI:60240"/>
        <label>1</label>
    </ligand>
</feature>
<feature type="binding site" evidence="1">
    <location>
        <position position="218"/>
    </location>
    <ligand>
        <name>a divalent metal cation</name>
        <dbReference type="ChEBI" id="CHEBI:60240"/>
        <label>2</label>
    </ligand>
</feature>
<feature type="binding site" evidence="1">
    <location>
        <position position="218"/>
    </location>
    <ligand>
        <name>a divalent metal cation</name>
        <dbReference type="ChEBI" id="CHEBI:60240"/>
        <label>3</label>
    </ligand>
</feature>
<feature type="binding site" evidence="1">
    <location>
        <position position="222"/>
    </location>
    <ligand>
        <name>a divalent metal cation</name>
        <dbReference type="ChEBI" id="CHEBI:60240"/>
        <label>1</label>
    </ligand>
</feature>
<feature type="binding site" evidence="1">
    <location>
        <position position="222"/>
    </location>
    <ligand>
        <name>a divalent metal cation</name>
        <dbReference type="ChEBI" id="CHEBI:60240"/>
        <label>3</label>
    </ligand>
</feature>
<feature type="binding site" evidence="1">
    <location>
        <begin position="236"/>
        <end position="243"/>
    </location>
    <ligand>
        <name>substrate</name>
    </ligand>
</feature>
<feature type="binding site" evidence="1">
    <location>
        <position position="264"/>
    </location>
    <ligand>
        <name>a divalent metal cation</name>
        <dbReference type="ChEBI" id="CHEBI:60240"/>
        <label>1</label>
    </ligand>
</feature>
<feature type="binding site" evidence="1">
    <location>
        <position position="264"/>
    </location>
    <ligand>
        <name>a divalent metal cation</name>
        <dbReference type="ChEBI" id="CHEBI:60240"/>
        <label>3</label>
    </ligand>
</feature>
<keyword id="KW-0378">Hydrolase</keyword>
<keyword id="KW-0460">Magnesium</keyword>
<keyword id="KW-0464">Manganese</keyword>
<keyword id="KW-0479">Metal-binding</keyword>
<keyword id="KW-0520">NAD</keyword>
<keyword id="KW-1185">Reference proteome</keyword>
<comment type="function">
    <text evidence="1">mRNA decapping enzyme that specifically removes the nicotinamide adenine dinucleotide (NAD) cap from a subset of mRNAs by hydrolyzing the diphosphate linkage to produce nicotinamide mononucleotide (NMN) and 5' monophosphate mRNA. The NAD-cap is present at the 5'-end of some mRNAs and stabilizes RNA against 5'-processing. Has preference for mRNAs with a 5'-end purine. Catalyzes the hydrolysis of a broad range of dinucleotide pyrophosphates.</text>
</comment>
<comment type="catalytic activity">
    <reaction evidence="1">
        <text>a 5'-end NAD(+)-phospho-ribonucleoside in mRNA + H2O = a 5'-end phospho-adenosine-phospho-ribonucleoside in mRNA + beta-nicotinamide D-ribonucleotide + 2 H(+)</text>
        <dbReference type="Rhea" id="RHEA:60876"/>
        <dbReference type="Rhea" id="RHEA-COMP:15698"/>
        <dbReference type="Rhea" id="RHEA-COMP:15719"/>
        <dbReference type="ChEBI" id="CHEBI:14649"/>
        <dbReference type="ChEBI" id="CHEBI:15377"/>
        <dbReference type="ChEBI" id="CHEBI:15378"/>
        <dbReference type="ChEBI" id="CHEBI:144029"/>
        <dbReference type="ChEBI" id="CHEBI:144051"/>
    </reaction>
    <physiologicalReaction direction="left-to-right" evidence="1">
        <dbReference type="Rhea" id="RHEA:60877"/>
    </physiologicalReaction>
</comment>
<comment type="catalytic activity">
    <reaction evidence="1">
        <text>NAD(+) + H2O = beta-nicotinamide D-ribonucleotide + AMP + 2 H(+)</text>
        <dbReference type="Rhea" id="RHEA:11800"/>
        <dbReference type="ChEBI" id="CHEBI:14649"/>
        <dbReference type="ChEBI" id="CHEBI:15377"/>
        <dbReference type="ChEBI" id="CHEBI:15378"/>
        <dbReference type="ChEBI" id="CHEBI:57540"/>
        <dbReference type="ChEBI" id="CHEBI:456215"/>
        <dbReference type="EC" id="3.6.1.22"/>
    </reaction>
</comment>
<comment type="catalytic activity">
    <reaction evidence="1">
        <text>NADH + H2O = reduced beta-nicotinamide D-ribonucleotide + AMP + 2 H(+)</text>
        <dbReference type="Rhea" id="RHEA:48868"/>
        <dbReference type="ChEBI" id="CHEBI:15377"/>
        <dbReference type="ChEBI" id="CHEBI:15378"/>
        <dbReference type="ChEBI" id="CHEBI:57945"/>
        <dbReference type="ChEBI" id="CHEBI:90832"/>
        <dbReference type="ChEBI" id="CHEBI:456215"/>
        <dbReference type="EC" id="3.6.1.22"/>
    </reaction>
</comment>
<comment type="cofactor">
    <cofactor evidence="1">
        <name>Mg(2+)</name>
        <dbReference type="ChEBI" id="CHEBI:18420"/>
    </cofactor>
    <cofactor evidence="1">
        <name>Mn(2+)</name>
        <dbReference type="ChEBI" id="CHEBI:29035"/>
    </cofactor>
    <text evidence="1">Divalent metal cations. Mg(2+) or Mn(2+).</text>
</comment>
<comment type="subunit">
    <text evidence="1">Homodimer.</text>
</comment>
<comment type="similarity">
    <text evidence="1 2">Belongs to the Nudix hydrolase family. NudC subfamily.</text>
</comment>
<comment type="sequence caution" evidence="2">
    <conflict type="erroneous initiation">
        <sequence resource="EMBL-CDS" id="AAK47636"/>
    </conflict>
</comment>
<proteinExistence type="inferred from homology"/>